<dbReference type="EMBL" id="CR382121">
    <property type="protein sequence ID" value="CAH02869.1"/>
    <property type="molecule type" value="Genomic_DNA"/>
</dbReference>
<dbReference type="RefSeq" id="XP_451281.1">
    <property type="nucleotide sequence ID" value="XM_451281.1"/>
</dbReference>
<dbReference type="FunCoup" id="Q6CXQ8">
    <property type="interactions" value="96"/>
</dbReference>
<dbReference type="STRING" id="284590.Q6CXQ8"/>
<dbReference type="GlyCosmos" id="Q6CXQ8">
    <property type="glycosylation" value="1 site, No reported glycans"/>
</dbReference>
<dbReference type="PaxDb" id="284590-Q6CXQ8"/>
<dbReference type="KEGG" id="kla:KLLA0_A06303g"/>
<dbReference type="eggNOG" id="ENOG502QVJJ">
    <property type="taxonomic scope" value="Eukaryota"/>
</dbReference>
<dbReference type="HOGENOM" id="CLU_089705_0_0_1"/>
<dbReference type="InParanoid" id="Q6CXQ8"/>
<dbReference type="OMA" id="NKGNAID"/>
<dbReference type="Proteomes" id="UP000000598">
    <property type="component" value="Chromosome A"/>
</dbReference>
<dbReference type="GO" id="GO:0030659">
    <property type="term" value="C:cytoplasmic vesicle membrane"/>
    <property type="evidence" value="ECO:0007669"/>
    <property type="project" value="UniProtKB-SubCell"/>
</dbReference>
<dbReference type="GO" id="GO:0000139">
    <property type="term" value="C:Golgi membrane"/>
    <property type="evidence" value="ECO:0007669"/>
    <property type="project" value="UniProtKB-SubCell"/>
</dbReference>
<dbReference type="GO" id="GO:0031966">
    <property type="term" value="C:mitochondrial membrane"/>
    <property type="evidence" value="ECO:0007669"/>
    <property type="project" value="UniProtKB-SubCell"/>
</dbReference>
<dbReference type="GO" id="GO:0034045">
    <property type="term" value="C:phagophore assembly site membrane"/>
    <property type="evidence" value="ECO:0007669"/>
    <property type="project" value="UniProtKB-SubCell"/>
</dbReference>
<dbReference type="GO" id="GO:0006914">
    <property type="term" value="P:autophagy"/>
    <property type="evidence" value="ECO:0007669"/>
    <property type="project" value="UniProtKB-KW"/>
</dbReference>
<dbReference type="GO" id="GO:0015031">
    <property type="term" value="P:protein transport"/>
    <property type="evidence" value="ECO:0007669"/>
    <property type="project" value="UniProtKB-KW"/>
</dbReference>
<dbReference type="InterPro" id="IPR018939">
    <property type="entry name" value="Autophagy-rel_prot_27"/>
</dbReference>
<dbReference type="InterPro" id="IPR044865">
    <property type="entry name" value="MRH_dom"/>
</dbReference>
<dbReference type="Pfam" id="PF09451">
    <property type="entry name" value="ATG27"/>
    <property type="match status" value="1"/>
</dbReference>
<dbReference type="PROSITE" id="PS51914">
    <property type="entry name" value="MRH"/>
    <property type="match status" value="1"/>
</dbReference>
<comment type="function">
    <text evidence="1">Effector of VPS34 phosphatidylinositol 3-phosphate kinase signaling. Regulates the cytoplasm to vacuole transport (Cvt) vesicle formation. Plays a role in ATG protein retrieval from the pre-autophagosomal structure (PAS) and is especially required for autophagy-dependent cycling of ATG9 (By similarity).</text>
</comment>
<comment type="subcellular location">
    <subcellularLocation>
        <location evidence="1">Cytoplasmic vesicle membrane</location>
        <topology evidence="1">Single-pass type I membrane protein</topology>
    </subcellularLocation>
    <subcellularLocation>
        <location evidence="1">Golgi apparatus membrane</location>
        <topology evidence="1">Single-pass type I membrane protein</topology>
    </subcellularLocation>
    <subcellularLocation>
        <location evidence="1">Mitochondrion membrane</location>
        <topology evidence="1">Single-pass membrane protein</topology>
    </subcellularLocation>
    <subcellularLocation>
        <location evidence="1">Preautophagosomal structure membrane</location>
        <topology evidence="1">Single-pass type I membrane protein</topology>
    </subcellularLocation>
    <text evidence="1">Cycles among the pre-autophagosomal structure (PAS), mitochondria and Golgi.</text>
</comment>
<comment type="similarity">
    <text evidence="5">Belongs to the ATG27 family.</text>
</comment>
<keyword id="KW-0072">Autophagy</keyword>
<keyword id="KW-0968">Cytoplasmic vesicle</keyword>
<keyword id="KW-1015">Disulfide bond</keyword>
<keyword id="KW-0325">Glycoprotein</keyword>
<keyword id="KW-0333">Golgi apparatus</keyword>
<keyword id="KW-0472">Membrane</keyword>
<keyword id="KW-0496">Mitochondrion</keyword>
<keyword id="KW-0653">Protein transport</keyword>
<keyword id="KW-1185">Reference proteome</keyword>
<keyword id="KW-0732">Signal</keyword>
<keyword id="KW-0812">Transmembrane</keyword>
<keyword id="KW-1133">Transmembrane helix</keyword>
<keyword id="KW-0813">Transport</keyword>
<evidence type="ECO:0000250" key="1"/>
<evidence type="ECO:0000255" key="2"/>
<evidence type="ECO:0000255" key="3">
    <source>
        <dbReference type="PROSITE-ProRule" id="PRU01262"/>
    </source>
</evidence>
<evidence type="ECO:0000256" key="4">
    <source>
        <dbReference type="SAM" id="MobiDB-lite"/>
    </source>
</evidence>
<evidence type="ECO:0000305" key="5"/>
<protein>
    <recommendedName>
        <fullName>Autophagy-related protein 27</fullName>
    </recommendedName>
</protein>
<feature type="signal peptide" evidence="2">
    <location>
        <begin position="1"/>
        <end position="18"/>
    </location>
</feature>
<feature type="chain" id="PRO_0000001778" description="Autophagy-related protein 27">
    <location>
        <begin position="19"/>
        <end position="285"/>
    </location>
</feature>
<feature type="topological domain" description="Lumenal" evidence="2">
    <location>
        <begin position="19"/>
        <end position="209"/>
    </location>
</feature>
<feature type="transmembrane region" description="Helical" evidence="2">
    <location>
        <begin position="210"/>
        <end position="230"/>
    </location>
</feature>
<feature type="topological domain" description="Cytoplasmic" evidence="2">
    <location>
        <begin position="231"/>
        <end position="285"/>
    </location>
</feature>
<feature type="domain" description="MRH" evidence="3">
    <location>
        <begin position="19"/>
        <end position="167"/>
    </location>
</feature>
<feature type="region of interest" description="Disordered" evidence="4">
    <location>
        <begin position="168"/>
        <end position="204"/>
    </location>
</feature>
<feature type="compositionally biased region" description="Acidic residues" evidence="4">
    <location>
        <begin position="177"/>
        <end position="188"/>
    </location>
</feature>
<feature type="compositionally biased region" description="Basic and acidic residues" evidence="4">
    <location>
        <begin position="189"/>
        <end position="200"/>
    </location>
</feature>
<feature type="glycosylation site" description="N-linked (GlcNAc...) asparagine" evidence="2">
    <location>
        <position position="199"/>
    </location>
</feature>
<feature type="disulfide bond" evidence="3">
    <location>
        <begin position="21"/>
        <end position="59"/>
    </location>
</feature>
<feature type="disulfide bond" evidence="3">
    <location>
        <begin position="72"/>
        <end position="79"/>
    </location>
</feature>
<feature type="disulfide bond" evidence="3">
    <location>
        <begin position="136"/>
        <end position="165"/>
    </location>
</feature>
<name>ATG27_KLULA</name>
<reference key="1">
    <citation type="journal article" date="2004" name="Nature">
        <title>Genome evolution in yeasts.</title>
        <authorList>
            <person name="Dujon B."/>
            <person name="Sherman D."/>
            <person name="Fischer G."/>
            <person name="Durrens P."/>
            <person name="Casaregola S."/>
            <person name="Lafontaine I."/>
            <person name="de Montigny J."/>
            <person name="Marck C."/>
            <person name="Neuveglise C."/>
            <person name="Talla E."/>
            <person name="Goffard N."/>
            <person name="Frangeul L."/>
            <person name="Aigle M."/>
            <person name="Anthouard V."/>
            <person name="Babour A."/>
            <person name="Barbe V."/>
            <person name="Barnay S."/>
            <person name="Blanchin S."/>
            <person name="Beckerich J.-M."/>
            <person name="Beyne E."/>
            <person name="Bleykasten C."/>
            <person name="Boisrame A."/>
            <person name="Boyer J."/>
            <person name="Cattolico L."/>
            <person name="Confanioleri F."/>
            <person name="de Daruvar A."/>
            <person name="Despons L."/>
            <person name="Fabre E."/>
            <person name="Fairhead C."/>
            <person name="Ferry-Dumazet H."/>
            <person name="Groppi A."/>
            <person name="Hantraye F."/>
            <person name="Hennequin C."/>
            <person name="Jauniaux N."/>
            <person name="Joyet P."/>
            <person name="Kachouri R."/>
            <person name="Kerrest A."/>
            <person name="Koszul R."/>
            <person name="Lemaire M."/>
            <person name="Lesur I."/>
            <person name="Ma L."/>
            <person name="Muller H."/>
            <person name="Nicaud J.-M."/>
            <person name="Nikolski M."/>
            <person name="Oztas S."/>
            <person name="Ozier-Kalogeropoulos O."/>
            <person name="Pellenz S."/>
            <person name="Potier S."/>
            <person name="Richard G.-F."/>
            <person name="Straub M.-L."/>
            <person name="Suleau A."/>
            <person name="Swennen D."/>
            <person name="Tekaia F."/>
            <person name="Wesolowski-Louvel M."/>
            <person name="Westhof E."/>
            <person name="Wirth B."/>
            <person name="Zeniou-Meyer M."/>
            <person name="Zivanovic Y."/>
            <person name="Bolotin-Fukuhara M."/>
            <person name="Thierry A."/>
            <person name="Bouchier C."/>
            <person name="Caudron B."/>
            <person name="Scarpelli C."/>
            <person name="Gaillardin C."/>
            <person name="Weissenbach J."/>
            <person name="Wincker P."/>
            <person name="Souciet J.-L."/>
        </authorList>
    </citation>
    <scope>NUCLEOTIDE SEQUENCE [LARGE SCALE GENOMIC DNA]</scope>
    <source>
        <strain>ATCC 8585 / CBS 2359 / DSM 70799 / NBRC 1267 / NRRL Y-1140 / WM37</strain>
    </source>
</reference>
<proteinExistence type="inferred from homology"/>
<organism>
    <name type="scientific">Kluyveromyces lactis (strain ATCC 8585 / CBS 2359 / DSM 70799 / NBRC 1267 / NRRL Y-1140 / WM37)</name>
    <name type="common">Yeast</name>
    <name type="synonym">Candida sphaerica</name>
    <dbReference type="NCBI Taxonomy" id="284590"/>
    <lineage>
        <taxon>Eukaryota</taxon>
        <taxon>Fungi</taxon>
        <taxon>Dikarya</taxon>
        <taxon>Ascomycota</taxon>
        <taxon>Saccharomycotina</taxon>
        <taxon>Saccharomycetes</taxon>
        <taxon>Saccharomycetales</taxon>
        <taxon>Saccharomycetaceae</taxon>
        <taxon>Kluyveromyces</taxon>
    </lineage>
</organism>
<accession>Q6CXQ8</accession>
<sequence>MKVLLATALVSLLPFSSAVECSKNEILNKYRVNEFSIGGVSVQDTPPSETKESWWLNICDEHDSKSSIPDQCNVKDIFCGVTSVALPGKESIVTKVMDFTSSVALEVKETAEALSIRLSGAAWGSHILNADIYLQCQEKGSGSLTESSWTDDQNVKLVFSGPFGCLKKGNDNKDGNGDDDNNDKDGDDSDKKPHDGDKNGSKPKGGAGLGSWLVWLFMYATIFALIYLVVTSYMNTRNGSFNDFREEFVDRSTTFATNLPQFAKEVAGKIVNSGSSSQRGGYSAV</sequence>
<gene>
    <name type="primary">ATG27</name>
    <name type="ordered locus">KLLA0A06303g</name>
</gene>